<gene>
    <name evidence="2" type="primary">fmr1-a</name>
</gene>
<reference key="1">
    <citation type="journal article" date="1995" name="EMBO J.">
        <title>FXR1, an autosomal homolog of the fragile X mental retardation gene.</title>
        <authorList>
            <person name="Siomi M.C."/>
            <person name="Siomi H."/>
            <person name="Sauer W.H."/>
            <person name="Srinivasan S."/>
            <person name="Nussbaum R.L."/>
            <person name="Dreyfuss G."/>
        </authorList>
    </citation>
    <scope>NUCLEOTIDE SEQUENCE [MRNA]</scope>
    <scope>RNA-BINDING</scope>
    <source>
        <tissue>Ovary</tissue>
    </source>
</reference>
<reference key="2">
    <citation type="journal article" date="2005" name="Int. J. Dev. Biol.">
        <title>Developmental expression of Xenopus fragile X mental retardation-1 gene.</title>
        <authorList>
            <person name="Lim J.H."/>
            <person name="Luo T."/>
            <person name="Sargent T.D."/>
            <person name="Fallon J.R."/>
        </authorList>
    </citation>
    <scope>TISSUE SPECIFICITY</scope>
    <scope>DEVELOPMENTAL STAGE</scope>
</reference>
<reference key="3">
    <citation type="journal article" date="2005" name="Mol. Biol. Cell">
        <title>The RNA-binding protein Fragile X-related 1 regulates somite formation in Xenopus laevis.</title>
        <authorList>
            <person name="Huot M.-E."/>
            <person name="Bisson N."/>
            <person name="Davidovic L."/>
            <person name="Mazroui R."/>
            <person name="Labelle Y."/>
            <person name="Moss T."/>
            <person name="Khandjian E.W."/>
        </authorList>
    </citation>
    <scope>TISSUE SPECIFICITY</scope>
</reference>
<sequence length="564" mass="63859">MEELAVEVRGSNGAFYKAFMKDVHEDSITVTFENNWQQERQIPFHDVRFPPPSGYNKDINERDEVEVYSRANEKEPCCWWLAKVRMIKGEFYVIEYAACDATYNEIVTIERLRSVNPNKPATKSSFHKVKLDVPEDLRQMCAKDSAHKDFKKAVGAFSVSYDSENYQLVILSVNEVSIKRASMLSDMHFRSLRTKLSLMLRNEEASKQLESSRQLASRFHEQFIVREDLMGLAIGTHGANIQQARKVPGVTAIDLDEDTCTFHIYGEDQEAVKKARTYLEFAENVIQVPRNLVGKVIGKNGKLIQEIVDKSGVVRVRIEAENDKNISQEEGIVPFVFVGTKDSITNATVLLDYHLNYLKEVDQLRLERLQIDEQLRHIGASSRPPPNRPDKEKGYLSEDCSGTVRGSRPYSNRGRSRRGTGYASGTNSEASNASETESDHRDELSDWSLAPAEDDRDNYHRRGDGRRRGGTRGQGMRGRGGFKGNDDQPRPDNRQRNSRETKARTSDGSLQIRLDCNNERSVHTKTLQNASVDGSRLRTGKDRVQKKEKTDGVDGPQVVVNGVP</sequence>
<proteinExistence type="evidence at protein level"/>
<dbReference type="EMBL" id="U25164">
    <property type="protein sequence ID" value="AAC59683.1"/>
    <property type="molecule type" value="mRNA"/>
</dbReference>
<dbReference type="RefSeq" id="NP_001079156.1">
    <property type="nucleotide sequence ID" value="NM_001085687.1"/>
</dbReference>
<dbReference type="SMR" id="P51113"/>
<dbReference type="GeneID" id="373706"/>
<dbReference type="KEGG" id="xla:373706"/>
<dbReference type="AGR" id="Xenbase:XB-GENE-6252724"/>
<dbReference type="CTD" id="373706"/>
<dbReference type="Xenbase" id="XB-GENE-6252724">
    <property type="gene designation" value="fmr1.L"/>
</dbReference>
<dbReference type="OrthoDB" id="424249at2759"/>
<dbReference type="Proteomes" id="UP000186698">
    <property type="component" value="Chromosome 8L"/>
</dbReference>
<dbReference type="Bgee" id="373706">
    <property type="expression patterns" value="Expressed in lung and 19 other cell types or tissues"/>
</dbReference>
<dbReference type="GO" id="GO:0030424">
    <property type="term" value="C:axon"/>
    <property type="evidence" value="ECO:0000250"/>
    <property type="project" value="UniProtKB"/>
</dbReference>
<dbReference type="GO" id="GO:0043679">
    <property type="term" value="C:axon terminus"/>
    <property type="evidence" value="ECO:0000250"/>
    <property type="project" value="UniProtKB"/>
</dbReference>
<dbReference type="GO" id="GO:0042995">
    <property type="term" value="C:cell projection"/>
    <property type="evidence" value="ECO:0000250"/>
    <property type="project" value="UniProtKB"/>
</dbReference>
<dbReference type="GO" id="GO:0010369">
    <property type="term" value="C:chromocenter"/>
    <property type="evidence" value="ECO:0000250"/>
    <property type="project" value="UniProtKB"/>
</dbReference>
<dbReference type="GO" id="GO:0005694">
    <property type="term" value="C:chromosome"/>
    <property type="evidence" value="ECO:0000250"/>
    <property type="project" value="UniProtKB"/>
</dbReference>
<dbReference type="GO" id="GO:0000775">
    <property type="term" value="C:chromosome, centromeric region"/>
    <property type="evidence" value="ECO:0007669"/>
    <property type="project" value="UniProtKB-SubCell"/>
</dbReference>
<dbReference type="GO" id="GO:0005737">
    <property type="term" value="C:cytoplasm"/>
    <property type="evidence" value="ECO:0000250"/>
    <property type="project" value="UniProtKB"/>
</dbReference>
<dbReference type="GO" id="GO:0036464">
    <property type="term" value="C:cytoplasmic ribonucleoprotein granule"/>
    <property type="evidence" value="ECO:0000250"/>
    <property type="project" value="UniProtKB"/>
</dbReference>
<dbReference type="GO" id="GO:0010494">
    <property type="term" value="C:cytoplasmic stress granule"/>
    <property type="evidence" value="ECO:0000250"/>
    <property type="project" value="UniProtKB"/>
</dbReference>
<dbReference type="GO" id="GO:0030425">
    <property type="term" value="C:dendrite"/>
    <property type="evidence" value="ECO:0000250"/>
    <property type="project" value="UniProtKB"/>
</dbReference>
<dbReference type="GO" id="GO:1902737">
    <property type="term" value="C:dendritic filopodium"/>
    <property type="evidence" value="ECO:0000250"/>
    <property type="project" value="UniProtKB"/>
</dbReference>
<dbReference type="GO" id="GO:0043197">
    <property type="term" value="C:dendritic spine"/>
    <property type="evidence" value="ECO:0000250"/>
    <property type="project" value="UniProtKB"/>
</dbReference>
<dbReference type="GO" id="GO:0032433">
    <property type="term" value="C:filopodium tip"/>
    <property type="evidence" value="ECO:0000250"/>
    <property type="project" value="UniProtKB"/>
</dbReference>
<dbReference type="GO" id="GO:0097386">
    <property type="term" value="C:glial cell projection"/>
    <property type="evidence" value="ECO:0000250"/>
    <property type="project" value="UniProtKB"/>
</dbReference>
<dbReference type="GO" id="GO:0030426">
    <property type="term" value="C:growth cone"/>
    <property type="evidence" value="ECO:0000250"/>
    <property type="project" value="UniProtKB"/>
</dbReference>
<dbReference type="GO" id="GO:1990812">
    <property type="term" value="C:growth cone filopodium"/>
    <property type="evidence" value="ECO:0000250"/>
    <property type="project" value="UniProtKB"/>
</dbReference>
<dbReference type="GO" id="GO:0043232">
    <property type="term" value="C:intracellular membraneless organelle"/>
    <property type="evidence" value="ECO:0000250"/>
    <property type="project" value="UniProtKB"/>
</dbReference>
<dbReference type="GO" id="GO:0043005">
    <property type="term" value="C:neuron projection"/>
    <property type="evidence" value="ECO:0000250"/>
    <property type="project" value="UniProtKB"/>
</dbReference>
<dbReference type="GO" id="GO:0071598">
    <property type="term" value="C:neuronal ribonucleoprotein granule"/>
    <property type="evidence" value="ECO:0000250"/>
    <property type="project" value="UniProtKB"/>
</dbReference>
<dbReference type="GO" id="GO:0005730">
    <property type="term" value="C:nucleolus"/>
    <property type="evidence" value="ECO:0000250"/>
    <property type="project" value="UniProtKB"/>
</dbReference>
<dbReference type="GO" id="GO:0005654">
    <property type="term" value="C:nucleoplasm"/>
    <property type="evidence" value="ECO:0000250"/>
    <property type="project" value="UniProtKB"/>
</dbReference>
<dbReference type="GO" id="GO:0005634">
    <property type="term" value="C:nucleus"/>
    <property type="evidence" value="ECO:0000250"/>
    <property type="project" value="UniProtKB"/>
</dbReference>
<dbReference type="GO" id="GO:0043204">
    <property type="term" value="C:perikaryon"/>
    <property type="evidence" value="ECO:0000250"/>
    <property type="project" value="UniProtKB"/>
</dbReference>
<dbReference type="GO" id="GO:0048471">
    <property type="term" value="C:perinuclear region of cytoplasm"/>
    <property type="evidence" value="ECO:0000250"/>
    <property type="project" value="UniProtKB"/>
</dbReference>
<dbReference type="GO" id="GO:0098794">
    <property type="term" value="C:postsynapse"/>
    <property type="evidence" value="ECO:0000250"/>
    <property type="project" value="UniProtKB"/>
</dbReference>
<dbReference type="GO" id="GO:0014069">
    <property type="term" value="C:postsynaptic density"/>
    <property type="evidence" value="ECO:0000250"/>
    <property type="project" value="UniProtKB"/>
</dbReference>
<dbReference type="GO" id="GO:0045211">
    <property type="term" value="C:postsynaptic membrane"/>
    <property type="evidence" value="ECO:0007669"/>
    <property type="project" value="UniProtKB-SubCell"/>
</dbReference>
<dbReference type="GO" id="GO:0098793">
    <property type="term" value="C:presynapse"/>
    <property type="evidence" value="ECO:0000250"/>
    <property type="project" value="UniProtKB"/>
</dbReference>
<dbReference type="GO" id="GO:0042734">
    <property type="term" value="C:presynaptic membrane"/>
    <property type="evidence" value="ECO:0007669"/>
    <property type="project" value="UniProtKB-SubCell"/>
</dbReference>
<dbReference type="GO" id="GO:1990904">
    <property type="term" value="C:ribonucleoprotein complex"/>
    <property type="evidence" value="ECO:0007669"/>
    <property type="project" value="UniProtKB-KW"/>
</dbReference>
<dbReference type="GO" id="GO:0045202">
    <property type="term" value="C:synapse"/>
    <property type="evidence" value="ECO:0000250"/>
    <property type="project" value="UniProtKB"/>
</dbReference>
<dbReference type="GO" id="GO:0003682">
    <property type="term" value="F:chromatin binding"/>
    <property type="evidence" value="ECO:0000250"/>
    <property type="project" value="UniProtKB"/>
</dbReference>
<dbReference type="GO" id="GO:0070840">
    <property type="term" value="F:dynein complex binding"/>
    <property type="evidence" value="ECO:0000250"/>
    <property type="project" value="UniProtKB"/>
</dbReference>
<dbReference type="GO" id="GO:0002151">
    <property type="term" value="F:G-quadruplex RNA binding"/>
    <property type="evidence" value="ECO:0000250"/>
    <property type="project" value="UniProtKB"/>
</dbReference>
<dbReference type="GO" id="GO:0140006">
    <property type="term" value="F:histone H3 reader activity"/>
    <property type="evidence" value="ECO:0000250"/>
    <property type="project" value="UniProtKB"/>
</dbReference>
<dbReference type="GO" id="GO:0008017">
    <property type="term" value="F:microtubule binding"/>
    <property type="evidence" value="ECO:0000250"/>
    <property type="project" value="UniProtKB"/>
</dbReference>
<dbReference type="GO" id="GO:0035198">
    <property type="term" value="F:miRNA binding"/>
    <property type="evidence" value="ECO:0000250"/>
    <property type="project" value="UniProtKB"/>
</dbReference>
<dbReference type="GO" id="GO:0140693">
    <property type="term" value="F:molecular condensate scaffold activity"/>
    <property type="evidence" value="ECO:0000250"/>
    <property type="project" value="UniProtKB"/>
</dbReference>
<dbReference type="GO" id="GO:0003730">
    <property type="term" value="F:mRNA 3'-UTR binding"/>
    <property type="evidence" value="ECO:0000250"/>
    <property type="project" value="UniProtKB"/>
</dbReference>
<dbReference type="GO" id="GO:0048027">
    <property type="term" value="F:mRNA 5'-UTR binding"/>
    <property type="evidence" value="ECO:0000250"/>
    <property type="project" value="UniProtKB"/>
</dbReference>
<dbReference type="GO" id="GO:0003729">
    <property type="term" value="F:mRNA binding"/>
    <property type="evidence" value="ECO:0000250"/>
    <property type="project" value="UniProtKB"/>
</dbReference>
<dbReference type="GO" id="GO:1990247">
    <property type="term" value="F:N6-methyladenosine-containing RNA reader activity"/>
    <property type="evidence" value="ECO:0000250"/>
    <property type="project" value="UniProtKB"/>
</dbReference>
<dbReference type="GO" id="GO:0034046">
    <property type="term" value="F:poly(G) binding"/>
    <property type="evidence" value="ECO:0000250"/>
    <property type="project" value="UniProtKB"/>
</dbReference>
<dbReference type="GO" id="GO:0008266">
    <property type="term" value="F:poly(U) RNA binding"/>
    <property type="evidence" value="ECO:0000250"/>
    <property type="project" value="UniProtKB"/>
</dbReference>
<dbReference type="GO" id="GO:0046982">
    <property type="term" value="F:protein heterodimerization activity"/>
    <property type="evidence" value="ECO:0000250"/>
    <property type="project" value="UniProtKB"/>
</dbReference>
<dbReference type="GO" id="GO:0042803">
    <property type="term" value="F:protein homodimerization activity"/>
    <property type="evidence" value="ECO:0000250"/>
    <property type="project" value="UniProtKB"/>
</dbReference>
<dbReference type="GO" id="GO:0003723">
    <property type="term" value="F:RNA binding"/>
    <property type="evidence" value="ECO:0000314"/>
    <property type="project" value="UniProtKB"/>
</dbReference>
<dbReference type="GO" id="GO:0035613">
    <property type="term" value="F:RNA stem-loop binding"/>
    <property type="evidence" value="ECO:0000250"/>
    <property type="project" value="UniProtKB"/>
</dbReference>
<dbReference type="GO" id="GO:0033592">
    <property type="term" value="F:RNA strand annealing activity"/>
    <property type="evidence" value="ECO:0000250"/>
    <property type="project" value="UniProtKB"/>
</dbReference>
<dbReference type="GO" id="GO:1990825">
    <property type="term" value="F:sequence-specific mRNA binding"/>
    <property type="evidence" value="ECO:0000250"/>
    <property type="project" value="UniProtKB"/>
</dbReference>
<dbReference type="GO" id="GO:0035197">
    <property type="term" value="F:siRNA binding"/>
    <property type="evidence" value="ECO:0000250"/>
    <property type="project" value="UniProtKB"/>
</dbReference>
<dbReference type="GO" id="GO:0045182">
    <property type="term" value="F:translation regulator activity"/>
    <property type="evidence" value="ECO:0000318"/>
    <property type="project" value="GO_Central"/>
</dbReference>
<dbReference type="GO" id="GO:0030371">
    <property type="term" value="F:translation repressor activity"/>
    <property type="evidence" value="ECO:0000250"/>
    <property type="project" value="UniProtKB"/>
</dbReference>
<dbReference type="GO" id="GO:0048513">
    <property type="term" value="P:animal organ development"/>
    <property type="evidence" value="ECO:0000318"/>
    <property type="project" value="GO_Central"/>
</dbReference>
<dbReference type="GO" id="GO:0006281">
    <property type="term" value="P:DNA repair"/>
    <property type="evidence" value="ECO:0000250"/>
    <property type="project" value="UniProtKB"/>
</dbReference>
<dbReference type="GO" id="GO:0007215">
    <property type="term" value="P:glutamate receptor signaling pathway"/>
    <property type="evidence" value="ECO:0000250"/>
    <property type="project" value="UniProtKB"/>
</dbReference>
<dbReference type="GO" id="GO:0140694">
    <property type="term" value="P:membraneless organelle assembly"/>
    <property type="evidence" value="ECO:0000250"/>
    <property type="project" value="UniProtKB"/>
</dbReference>
<dbReference type="GO" id="GO:0030901">
    <property type="term" value="P:midbrain development"/>
    <property type="evidence" value="ECO:0000314"/>
    <property type="project" value="Xenbase"/>
</dbReference>
<dbReference type="GO" id="GO:0035195">
    <property type="term" value="P:miRNA-mediated post-transcriptional gene silencing"/>
    <property type="evidence" value="ECO:0000250"/>
    <property type="project" value="UniProtKB"/>
</dbReference>
<dbReference type="GO" id="GO:0006406">
    <property type="term" value="P:mRNA export from nucleus"/>
    <property type="evidence" value="ECO:0000250"/>
    <property type="project" value="UniProtKB"/>
</dbReference>
<dbReference type="GO" id="GO:0006397">
    <property type="term" value="P:mRNA processing"/>
    <property type="evidence" value="ECO:0007669"/>
    <property type="project" value="UniProtKB-KW"/>
</dbReference>
<dbReference type="GO" id="GO:0051028">
    <property type="term" value="P:mRNA transport"/>
    <property type="evidence" value="ECO:0000250"/>
    <property type="project" value="UniProtKB"/>
</dbReference>
<dbReference type="GO" id="GO:2000766">
    <property type="term" value="P:negative regulation of cytoplasmic translation"/>
    <property type="evidence" value="ECO:0000250"/>
    <property type="project" value="UniProtKB"/>
</dbReference>
<dbReference type="GO" id="GO:0010629">
    <property type="term" value="P:negative regulation of gene expression"/>
    <property type="evidence" value="ECO:0000250"/>
    <property type="project" value="UniProtKB"/>
</dbReference>
<dbReference type="GO" id="GO:1900453">
    <property type="term" value="P:negative regulation of long-term synaptic depression"/>
    <property type="evidence" value="ECO:0000250"/>
    <property type="project" value="UniProtKB"/>
</dbReference>
<dbReference type="GO" id="GO:0060965">
    <property type="term" value="P:negative regulation of miRNA-mediated gene silencing"/>
    <property type="evidence" value="ECO:0000250"/>
    <property type="project" value="UniProtKB"/>
</dbReference>
<dbReference type="GO" id="GO:2000301">
    <property type="term" value="P:negative regulation of synaptic vesicle exocytosis"/>
    <property type="evidence" value="ECO:0000250"/>
    <property type="project" value="UniProtKB"/>
</dbReference>
<dbReference type="GO" id="GO:0017148">
    <property type="term" value="P:negative regulation of translation"/>
    <property type="evidence" value="ECO:0000250"/>
    <property type="project" value="UniProtKB"/>
</dbReference>
<dbReference type="GO" id="GO:0045947">
    <property type="term" value="P:negative regulation of translational initiation"/>
    <property type="evidence" value="ECO:0000250"/>
    <property type="project" value="UniProtKB"/>
</dbReference>
<dbReference type="GO" id="GO:1901386">
    <property type="term" value="P:negative regulation of voltage-gated calcium channel activity"/>
    <property type="evidence" value="ECO:0000250"/>
    <property type="project" value="UniProtKB"/>
</dbReference>
<dbReference type="GO" id="GO:0061351">
    <property type="term" value="P:neural precursor cell proliferation"/>
    <property type="evidence" value="ECO:0000315"/>
    <property type="project" value="Xenbase"/>
</dbReference>
<dbReference type="GO" id="GO:0060999">
    <property type="term" value="P:positive regulation of dendritic spine development"/>
    <property type="evidence" value="ECO:0000250"/>
    <property type="project" value="UniProtKB"/>
</dbReference>
<dbReference type="GO" id="GO:0051491">
    <property type="term" value="P:positive regulation of filopodium assembly"/>
    <property type="evidence" value="ECO:0000250"/>
    <property type="project" value="UniProtKB"/>
</dbReference>
<dbReference type="GO" id="GO:0048170">
    <property type="term" value="P:positive regulation of long-term neuronal synaptic plasticity"/>
    <property type="evidence" value="ECO:0000318"/>
    <property type="project" value="GO_Central"/>
</dbReference>
<dbReference type="GO" id="GO:2000637">
    <property type="term" value="P:positive regulation of miRNA-mediated gene silencing"/>
    <property type="evidence" value="ECO:0000250"/>
    <property type="project" value="UniProtKB"/>
</dbReference>
<dbReference type="GO" id="GO:1901800">
    <property type="term" value="P:positive regulation of proteasomal protein catabolic process"/>
    <property type="evidence" value="ECO:0000250"/>
    <property type="project" value="UniProtKB"/>
</dbReference>
<dbReference type="GO" id="GO:0002092">
    <property type="term" value="P:positive regulation of receptor internalization"/>
    <property type="evidence" value="ECO:0000250"/>
    <property type="project" value="UniProtKB"/>
</dbReference>
<dbReference type="GO" id="GO:0045727">
    <property type="term" value="P:positive regulation of translation"/>
    <property type="evidence" value="ECO:0000250"/>
    <property type="project" value="UniProtKB"/>
</dbReference>
<dbReference type="GO" id="GO:0000381">
    <property type="term" value="P:regulation of alternative mRNA splicing, via spliceosome"/>
    <property type="evidence" value="ECO:0000250"/>
    <property type="project" value="UniProtKB"/>
</dbReference>
<dbReference type="GO" id="GO:0060998">
    <property type="term" value="P:regulation of dendritic spine development"/>
    <property type="evidence" value="ECO:0000250"/>
    <property type="project" value="UniProtKB"/>
</dbReference>
<dbReference type="GO" id="GO:0051489">
    <property type="term" value="P:regulation of filopodium assembly"/>
    <property type="evidence" value="ECO:0000250"/>
    <property type="project" value="UniProtKB"/>
</dbReference>
<dbReference type="GO" id="GO:0043488">
    <property type="term" value="P:regulation of mRNA stability"/>
    <property type="evidence" value="ECO:0000250"/>
    <property type="project" value="UniProtKB"/>
</dbReference>
<dbReference type="GO" id="GO:0098908">
    <property type="term" value="P:regulation of neuronal action potential"/>
    <property type="evidence" value="ECO:0000250"/>
    <property type="project" value="UniProtKB"/>
</dbReference>
<dbReference type="GO" id="GO:0046928">
    <property type="term" value="P:regulation of neurotransmitter secretion"/>
    <property type="evidence" value="ECO:0000250"/>
    <property type="project" value="UniProtKB"/>
</dbReference>
<dbReference type="GO" id="GO:0099577">
    <property type="term" value="P:regulation of translation at presynapse, modulating synaptic transmission"/>
    <property type="evidence" value="ECO:0000318"/>
    <property type="project" value="GO_Central"/>
</dbReference>
<dbReference type="GO" id="GO:0008380">
    <property type="term" value="P:RNA splicing"/>
    <property type="evidence" value="ECO:0007669"/>
    <property type="project" value="UniProtKB-KW"/>
</dbReference>
<dbReference type="GO" id="GO:0060538">
    <property type="term" value="P:skeletal muscle organ development"/>
    <property type="evidence" value="ECO:0000250"/>
    <property type="project" value="UniProtKB"/>
</dbReference>
<dbReference type="GO" id="GO:0034063">
    <property type="term" value="P:stress granule assembly"/>
    <property type="evidence" value="ECO:0000250"/>
    <property type="project" value="UniProtKB"/>
</dbReference>
<dbReference type="CDD" id="cd22506">
    <property type="entry name" value="KH_I_FMR1_rpt1"/>
    <property type="match status" value="1"/>
</dbReference>
<dbReference type="CDD" id="cd22509">
    <property type="entry name" value="KH_I_FMR1_rpt2"/>
    <property type="match status" value="1"/>
</dbReference>
<dbReference type="CDD" id="cd22512">
    <property type="entry name" value="KH_I_FMR1_rpt3"/>
    <property type="match status" value="1"/>
</dbReference>
<dbReference type="CDD" id="cd20471">
    <property type="entry name" value="Tudor_Agenet_FMR1_rpt1"/>
    <property type="match status" value="1"/>
</dbReference>
<dbReference type="CDD" id="cd20474">
    <property type="entry name" value="Tudor_Agenet_FMR1_rpt2"/>
    <property type="match status" value="1"/>
</dbReference>
<dbReference type="FunFam" id="2.30.30.140:FF:000001">
    <property type="entry name" value="Fragile X mental retardation 1, isoform CRA_e"/>
    <property type="match status" value="1"/>
</dbReference>
<dbReference type="FunFam" id="2.30.30.140:FF:000002">
    <property type="entry name" value="Fragile X mental retardation 1, isoform CRA_e"/>
    <property type="match status" value="1"/>
</dbReference>
<dbReference type="FunFam" id="3.30.1370.10:FF:000004">
    <property type="entry name" value="Fragile X mental retardation 1, isoform CRA_e"/>
    <property type="match status" value="1"/>
</dbReference>
<dbReference type="FunFam" id="3.30.1370.10:FF:000054">
    <property type="entry name" value="Fragile X mental retardation protein 1"/>
    <property type="match status" value="1"/>
</dbReference>
<dbReference type="Gene3D" id="2.30.30.140">
    <property type="match status" value="2"/>
</dbReference>
<dbReference type="Gene3D" id="3.30.1370.10">
    <property type="entry name" value="K Homology domain, type 1"/>
    <property type="match status" value="2"/>
</dbReference>
<dbReference type="InterPro" id="IPR008395">
    <property type="entry name" value="Agenet-like_dom"/>
</dbReference>
<dbReference type="InterPro" id="IPR040148">
    <property type="entry name" value="FMR1"/>
</dbReference>
<dbReference type="InterPro" id="IPR022034">
    <property type="entry name" value="FMR1-like_C_core"/>
</dbReference>
<dbReference type="InterPro" id="IPR032196">
    <property type="entry name" value="FMR1_C2"/>
</dbReference>
<dbReference type="InterPro" id="IPR040472">
    <property type="entry name" value="FMRP_KH0"/>
</dbReference>
<dbReference type="InterPro" id="IPR004087">
    <property type="entry name" value="KH_dom"/>
</dbReference>
<dbReference type="InterPro" id="IPR004088">
    <property type="entry name" value="KH_dom_type_1"/>
</dbReference>
<dbReference type="InterPro" id="IPR036612">
    <property type="entry name" value="KH_dom_type_1_sf"/>
</dbReference>
<dbReference type="InterPro" id="IPR047438">
    <property type="entry name" value="KH_I_FMR1_rpt1"/>
</dbReference>
<dbReference type="InterPro" id="IPR047440">
    <property type="entry name" value="KH_I_FMR1_rpt2"/>
</dbReference>
<dbReference type="InterPro" id="IPR047431">
    <property type="entry name" value="Tudor_Agenet_FMR1_rpt1"/>
</dbReference>
<dbReference type="InterPro" id="IPR047436">
    <property type="entry name" value="Tudor_Agenet_FMR1_rpt2"/>
</dbReference>
<dbReference type="InterPro" id="IPR041560">
    <property type="entry name" value="Tudor_FRM1"/>
</dbReference>
<dbReference type="PANTHER" id="PTHR10603">
    <property type="entry name" value="FRAGILE X MENTAL RETARDATION SYNDROME-RELATED PROTEIN"/>
    <property type="match status" value="1"/>
</dbReference>
<dbReference type="PANTHER" id="PTHR10603:SF4">
    <property type="entry name" value="FRAGILE X MESSENGER RIBONUCLEOPROTEIN 1"/>
    <property type="match status" value="1"/>
</dbReference>
<dbReference type="Pfam" id="PF05641">
    <property type="entry name" value="Agenet"/>
    <property type="match status" value="1"/>
</dbReference>
<dbReference type="Pfam" id="PF16098">
    <property type="entry name" value="FXMR_C2"/>
    <property type="match status" value="1"/>
</dbReference>
<dbReference type="Pfam" id="PF12235">
    <property type="entry name" value="FXMRP1_C_core"/>
    <property type="match status" value="1"/>
</dbReference>
<dbReference type="Pfam" id="PF00013">
    <property type="entry name" value="KH_1"/>
    <property type="match status" value="2"/>
</dbReference>
<dbReference type="Pfam" id="PF17904">
    <property type="entry name" value="KH_9"/>
    <property type="match status" value="1"/>
</dbReference>
<dbReference type="Pfam" id="PF18336">
    <property type="entry name" value="Tudor_FRX1"/>
    <property type="match status" value="1"/>
</dbReference>
<dbReference type="SMART" id="SM00322">
    <property type="entry name" value="KH"/>
    <property type="match status" value="2"/>
</dbReference>
<dbReference type="SUPFAM" id="SSF54791">
    <property type="entry name" value="Eukaryotic type KH-domain (KH-domain type I)"/>
    <property type="match status" value="2"/>
</dbReference>
<dbReference type="PROSITE" id="PS51641">
    <property type="entry name" value="AGENET_LIKE"/>
    <property type="match status" value="2"/>
</dbReference>
<dbReference type="PROSITE" id="PS50084">
    <property type="entry name" value="KH_TYPE_1"/>
    <property type="match status" value="2"/>
</dbReference>
<evidence type="ECO:0000250" key="1">
    <source>
        <dbReference type="UniProtKB" id="P35922"/>
    </source>
</evidence>
<evidence type="ECO:0000250" key="2">
    <source>
        <dbReference type="UniProtKB" id="Q06787"/>
    </source>
</evidence>
<evidence type="ECO:0000255" key="3">
    <source>
        <dbReference type="PROSITE-ProRule" id="PRU00117"/>
    </source>
</evidence>
<evidence type="ECO:0000255" key="4">
    <source>
        <dbReference type="PROSITE-ProRule" id="PRU00973"/>
    </source>
</evidence>
<evidence type="ECO:0000256" key="5">
    <source>
        <dbReference type="SAM" id="MobiDB-lite"/>
    </source>
</evidence>
<evidence type="ECO:0000269" key="6">
    <source>
    </source>
</evidence>
<evidence type="ECO:0000269" key="7">
    <source>
    </source>
</evidence>
<evidence type="ECO:0000269" key="8">
    <source>
    </source>
</evidence>
<evidence type="ECO:0000305" key="9"/>
<protein>
    <recommendedName>
        <fullName evidence="2">Fragile X messenger ribonucleoprotein 1 homolog A</fullName>
    </recommendedName>
    <alternativeName>
        <fullName evidence="9">xFMR1-A</fullName>
    </alternativeName>
</protein>
<comment type="function">
    <text evidence="2 8">Multifunctional polyribosome-associated RNA-binding protein that plays a central role in neuronal development and synaptic plasticity through the regulation of alternative mRNA splicing, mRNA stability, mRNA dendritic transport and postsynaptic local protein synthesis of target mRNAs (By similarity). Acts as an mRNA regulator by mediating formation of some phase-separated membraneless compartment: undergoes liquid-liquid phase separation upon binding to target mRNAs, leading to assemble mRNAs into cytoplasmic ribonucleoprotein granules that concentrate mRNAs with associated regulatory factors (By similarity). Binds poly(G) and poly(U), and to a lower extent poly(A) and poly(C) (PubMed:7781595). Forms a cytoplasmic messenger ribonucleoprotein (mRNP) network by packaging long mRNAs, serving as a scaffold that recruits proteins and signaling molecules. This network facilitates signaling reactions by maintaining proximity between kinases and substrates (By similarity).</text>
</comment>
<comment type="subunit">
    <text evidence="2">Homodimer. Heterodimer.</text>
</comment>
<comment type="subcellular location">
    <subcellularLocation>
        <location evidence="2">Nucleus</location>
    </subcellularLocation>
    <subcellularLocation>
        <location evidence="2">Nucleus</location>
        <location evidence="2">Nucleolus</location>
    </subcellularLocation>
    <subcellularLocation>
        <location evidence="1">Chromosome</location>
        <location evidence="1">Centromere</location>
    </subcellularLocation>
    <subcellularLocation>
        <location evidence="1">Chromosome</location>
    </subcellularLocation>
    <subcellularLocation>
        <location evidence="2">Cytoplasm</location>
        <location evidence="2">Perinuclear region</location>
    </subcellularLocation>
    <subcellularLocation>
        <location evidence="2">Cytoplasm</location>
        <location evidence="2">Cytoplasmic ribonucleoprotein granule</location>
    </subcellularLocation>
    <subcellularLocation>
        <location evidence="2">Cytoplasm</location>
        <location evidence="2">Stress granule</location>
    </subcellularLocation>
    <subcellularLocation>
        <location evidence="2">Perikaryon</location>
    </subcellularLocation>
    <subcellularLocation>
        <location evidence="2">Cell projection</location>
        <location evidence="2">Neuron projection</location>
    </subcellularLocation>
    <subcellularLocation>
        <location evidence="1">Cell projection</location>
        <location evidence="1">Axon</location>
    </subcellularLocation>
    <subcellularLocation>
        <location evidence="1">Cell projection</location>
        <location evidence="1">Dendrite</location>
    </subcellularLocation>
    <subcellularLocation>
        <location evidence="1">Cell projection</location>
        <location evidence="1">Dendritic spine</location>
    </subcellularLocation>
    <subcellularLocation>
        <location evidence="1">Synapse</location>
        <location evidence="1">Synaptosome</location>
    </subcellularLocation>
    <subcellularLocation>
        <location evidence="2">Cell projection</location>
        <location evidence="2">Growth cone</location>
    </subcellularLocation>
    <subcellularLocation>
        <location evidence="1">Cell projection</location>
        <location evidence="1">Filopodium tip</location>
    </subcellularLocation>
    <subcellularLocation>
        <location evidence="1">Synapse</location>
    </subcellularLocation>
    <subcellularLocation>
        <location evidence="1">Postsynaptic cell membrane</location>
    </subcellularLocation>
    <subcellularLocation>
        <location evidence="1">Presynaptic cell membrane</location>
    </subcellularLocation>
    <subcellularLocation>
        <location evidence="1">Cell membrane</location>
    </subcellularLocation>
</comment>
<comment type="tissue specificity">
    <text evidence="6 7">During early to late tailbud stage, expression intensifies in the craniofacial region with prominent staining in the endodermal, mesodermal and mesenchymal regions of the pharyngeal arches. By early tadpole stage (stage 35), expressed in the forebrain, midbrain, hindbrain and notochord in addition to craniofacial regions including the ear vesicles and eye. In the central nervous system (CNS) of late tadpoles (stage 45), expressed in the olfactory bulbs and the cerebellum. In adults, expressed predominantly in the brain.</text>
</comment>
<comment type="developmental stage">
    <text evidence="7">Expressed both maternally and zygotically. Zygotic expression begins just prior to gastrulation (stage 10) and gradually increases during subsequent embryonic stages.</text>
</comment>
<comment type="domain">
    <text evidence="2">The C-terminal disordered region undergoes liquid-liquid phase separation (LLPS) for the formation of a membraneless compartment that concentrates mRNAs with associated regulatory factors.</text>
</comment>
<comment type="similarity">
    <text evidence="9">Belongs to the FMR1 family.</text>
</comment>
<feature type="chain" id="PRO_0000050104" description="Fragile X messenger ribonucleoprotein 1 homolog A">
    <location>
        <begin position="1"/>
        <end position="564"/>
    </location>
</feature>
<feature type="domain" description="Agenet-like 1" evidence="4">
    <location>
        <begin position="4"/>
        <end position="50"/>
    </location>
</feature>
<feature type="domain" description="Agenet-like 2" evidence="4">
    <location>
        <begin position="63"/>
        <end position="115"/>
    </location>
</feature>
<feature type="domain" description="KH 1" evidence="3">
    <location>
        <begin position="222"/>
        <end position="251"/>
    </location>
</feature>
<feature type="domain" description="KH 2" evidence="3">
    <location>
        <begin position="285"/>
        <end position="314"/>
    </location>
</feature>
<feature type="region of interest" description="Disordered" evidence="5">
    <location>
        <begin position="377"/>
        <end position="564"/>
    </location>
</feature>
<feature type="region of interest" description="RNA-binding RGG-box">
    <location>
        <begin position="468"/>
        <end position="481"/>
    </location>
</feature>
<feature type="compositionally biased region" description="Low complexity" evidence="5">
    <location>
        <begin position="426"/>
        <end position="435"/>
    </location>
</feature>
<feature type="compositionally biased region" description="Gly residues" evidence="5">
    <location>
        <begin position="471"/>
        <end position="483"/>
    </location>
</feature>
<feature type="compositionally biased region" description="Basic and acidic residues" evidence="5">
    <location>
        <begin position="484"/>
        <end position="505"/>
    </location>
</feature>
<feature type="compositionally biased region" description="Basic and acidic residues" evidence="5">
    <location>
        <begin position="535"/>
        <end position="552"/>
    </location>
</feature>
<organism>
    <name type="scientific">Xenopus laevis</name>
    <name type="common">African clawed frog</name>
    <dbReference type="NCBI Taxonomy" id="8355"/>
    <lineage>
        <taxon>Eukaryota</taxon>
        <taxon>Metazoa</taxon>
        <taxon>Chordata</taxon>
        <taxon>Craniata</taxon>
        <taxon>Vertebrata</taxon>
        <taxon>Euteleostomi</taxon>
        <taxon>Amphibia</taxon>
        <taxon>Batrachia</taxon>
        <taxon>Anura</taxon>
        <taxon>Pipoidea</taxon>
        <taxon>Pipidae</taxon>
        <taxon>Xenopodinae</taxon>
        <taxon>Xenopus</taxon>
        <taxon>Xenopus</taxon>
    </lineage>
</organism>
<name>FMR1A_XENLA</name>
<keyword id="KW-1003">Cell membrane</keyword>
<keyword id="KW-0966">Cell projection</keyword>
<keyword id="KW-0137">Centromere</keyword>
<keyword id="KW-0158">Chromosome</keyword>
<keyword id="KW-0963">Cytoplasm</keyword>
<keyword id="KW-0472">Membrane</keyword>
<keyword id="KW-0507">mRNA processing</keyword>
<keyword id="KW-0508">mRNA splicing</keyword>
<keyword id="KW-0509">mRNA transport</keyword>
<keyword id="KW-0524">Neurogenesis</keyword>
<keyword id="KW-0539">Nucleus</keyword>
<keyword id="KW-0628">Postsynaptic cell membrane</keyword>
<keyword id="KW-1185">Reference proteome</keyword>
<keyword id="KW-0677">Repeat</keyword>
<keyword id="KW-0678">Repressor</keyword>
<keyword id="KW-0687">Ribonucleoprotein</keyword>
<keyword id="KW-0694">RNA-binding</keyword>
<keyword id="KW-0770">Synapse</keyword>
<keyword id="KW-0771">Synaptosome</keyword>
<keyword id="KW-0810">Translation regulation</keyword>
<keyword id="KW-0813">Transport</keyword>
<accession>P51113</accession>